<accession>P86795</accession>
<dbReference type="SMR" id="P86795"/>
<dbReference type="GO" id="GO:0033095">
    <property type="term" value="C:aleurone grain"/>
    <property type="evidence" value="ECO:0007669"/>
    <property type="project" value="UniProtKB-SubCell"/>
</dbReference>
<dbReference type="GO" id="GO:0005773">
    <property type="term" value="C:vacuole"/>
    <property type="evidence" value="ECO:0007669"/>
    <property type="project" value="UniProtKB-SubCell"/>
</dbReference>
<dbReference type="GO" id="GO:0005537">
    <property type="term" value="F:D-mannose binding"/>
    <property type="evidence" value="ECO:0007669"/>
    <property type="project" value="UniProtKB-KW"/>
</dbReference>
<dbReference type="GO" id="GO:0046872">
    <property type="term" value="F:metal ion binding"/>
    <property type="evidence" value="ECO:0007669"/>
    <property type="project" value="UniProtKB-KW"/>
</dbReference>
<dbReference type="CDD" id="cd06899">
    <property type="entry name" value="lectin_legume_LecRK_Arcelin_ConA"/>
    <property type="match status" value="1"/>
</dbReference>
<dbReference type="Gene3D" id="2.60.120.200">
    <property type="match status" value="1"/>
</dbReference>
<dbReference type="InterPro" id="IPR013320">
    <property type="entry name" value="ConA-like_dom_sf"/>
</dbReference>
<dbReference type="InterPro" id="IPR016363">
    <property type="entry name" value="L-lectin"/>
</dbReference>
<dbReference type="InterPro" id="IPR001220">
    <property type="entry name" value="Legume_lectin_dom"/>
</dbReference>
<dbReference type="InterPro" id="IPR050258">
    <property type="entry name" value="Leguminous_Lectin"/>
</dbReference>
<dbReference type="PANTHER" id="PTHR32401">
    <property type="entry name" value="CONCANAVALIN A-LIKE LECTIN FAMILY PROTEIN"/>
    <property type="match status" value="1"/>
</dbReference>
<dbReference type="PANTHER" id="PTHR32401:SF47">
    <property type="entry name" value="LEGUME LECTIN DOMAIN-CONTAINING PROTEIN"/>
    <property type="match status" value="1"/>
</dbReference>
<dbReference type="Pfam" id="PF00139">
    <property type="entry name" value="Lectin_legB"/>
    <property type="match status" value="1"/>
</dbReference>
<dbReference type="PIRSF" id="PIRSF002690">
    <property type="entry name" value="L-type_lectin_plant"/>
    <property type="match status" value="1"/>
</dbReference>
<dbReference type="SUPFAM" id="SSF49899">
    <property type="entry name" value="Concanavalin A-like lectins/glucanases"/>
    <property type="match status" value="1"/>
</dbReference>
<organism>
    <name type="scientific">Cymbosema roseum</name>
    <name type="common">Dioclea purpurea</name>
    <dbReference type="NCBI Taxonomy" id="202239"/>
    <lineage>
        <taxon>Eukaryota</taxon>
        <taxon>Viridiplantae</taxon>
        <taxon>Streptophyta</taxon>
        <taxon>Embryophyta</taxon>
        <taxon>Tracheophyta</taxon>
        <taxon>Spermatophyta</taxon>
        <taxon>Magnoliopsida</taxon>
        <taxon>eudicotyledons</taxon>
        <taxon>Gunneridae</taxon>
        <taxon>Pentapetalae</taxon>
        <taxon>rosids</taxon>
        <taxon>fabids</taxon>
        <taxon>Fabales</taxon>
        <taxon>Fabaceae</taxon>
        <taxon>Papilionoideae</taxon>
        <taxon>50 kb inversion clade</taxon>
        <taxon>NPAAA clade</taxon>
        <taxon>indigoferoid/millettioid clade</taxon>
        <taxon>Phaseoleae</taxon>
        <taxon>Cymbosema</taxon>
    </lineage>
</organism>
<protein>
    <recommendedName>
        <fullName>Lactose-binding lectin-2</fullName>
    </recommendedName>
    <alternativeName>
        <fullName evidence="5">Lectin-II</fullName>
        <shortName evidence="5 6">CRLII</shortName>
    </alternativeName>
</protein>
<sequence>SGAVHFSFTKFSTSSSDLTLQGSALVSSKGSLKKNPSKKGKPVDHSVGRALYRSPIHIWDETTGKVASFDATFSFVSEAPAIPMLFPSSKGELNDEDDTRIGGQLGVVNDSYNVIRVTVAVENDGYRNRVDPSARPHISLPIKSVRSKKTAKWNMQTGKVGTAHISYNSVAKRLSAVVSYTGNSSSTTVSYDVLLNLAVLPSKVLVGKTATGLYKDHVETNTILSWSFTSKLKTNSIAD</sequence>
<reference evidence="7" key="1">
    <citation type="submission" date="2010-08" db="UniProtKB">
        <title>Primary sequencing of CRLII by Edman's degradation and tandem mass spectrometry.</title>
        <authorList>
            <person name="Rocha B.A.M."/>
            <person name="Nagano C.S."/>
            <person name="Delatorre P."/>
            <person name="Calvete J.J."/>
            <person name="Cavada B.S."/>
        </authorList>
    </citation>
    <scope>PROTEIN SEQUENCE</scope>
    <scope>FUNCTION</scope>
    <scope>SUBUNIT</scope>
    <scope>SUBCELLULAR LOCATION</scope>
    <scope>TISSUE SPECIFICITY</scope>
    <scope>MASS SPECTROMETRY</scope>
    <source>
        <tissue evidence="4">Seed</tissue>
    </source>
</reference>
<reference evidence="7" key="2">
    <citation type="journal article" date="2009" name="Appl. Biochem. Biotechnol.">
        <title>Purification, characterization, and preliminary X-ray diffraction analysis of a lactose-specific lectin from Cymbosema roseum seeds.</title>
        <authorList>
            <person name="Rocha B.A."/>
            <person name="Moreno F.B."/>
            <person name="Delatorre P."/>
            <person name="Souza E.P."/>
            <person name="Marinho E.S."/>
            <person name="Benevides R.G."/>
            <person name="Rustiguel J.K."/>
            <person name="Souza L.A."/>
            <person name="Nagano C.S."/>
            <person name="Debray H."/>
            <person name="Sampaio A.H."/>
            <person name="de Azevedo W.F. Jr."/>
            <person name="Cavada B.S."/>
        </authorList>
    </citation>
    <scope>FUNCTION</scope>
    <scope>SUBUNIT</scope>
    <scope>TISSUE SPECIFICITY</scope>
    <scope>IDENTIFICATION BY MASS SPECTROMETRY</scope>
    <scope>PRELIMINARY CRYSTALLIZATION</scope>
    <source>
        <tissue evidence="3">Seed</tissue>
    </source>
</reference>
<name>LEC2_CYMRO</name>
<proteinExistence type="evidence at protein level"/>
<comment type="function">
    <text evidence="3 4">Lactose-binding lectin. Also binds derivatives of galactose, glucose, lactose, and mannose. Binds O-glycoproteins such as mucins more strongly than N-glycoproteins. Shows agglutinating activity towards rabbit erythrocytes.</text>
</comment>
<comment type="subunit">
    <text evidence="3 4">Homotetramer.</text>
</comment>
<comment type="subcellular location">
    <subcellularLocation>
        <location evidence="4">Vacuole</location>
        <location evidence="4">Aleurone grain</location>
    </subcellularLocation>
    <subcellularLocation>
        <location evidence="4">Vacuole</location>
    </subcellularLocation>
    <text evidence="4">Cotyledonary membrane-bound vacuolar protein bodies.</text>
</comment>
<comment type="tissue specificity">
    <text evidence="3 4">Seed.</text>
</comment>
<comment type="mass spectrometry"/>
<comment type="mass spectrometry"/>
<comment type="miscellaneous">
    <text>Binds one manganese (or another transition metal) ion and one calcium ion. The metal ions are essential for the saccharide-binding and cell-agglutinating activities.</text>
</comment>
<comment type="similarity">
    <text evidence="2">Belongs to the leguminous lectin family.</text>
</comment>
<evidence type="ECO:0000250" key="1">
    <source>
        <dbReference type="UniProtKB" id="P81637"/>
    </source>
</evidence>
<evidence type="ECO:0000255" key="2"/>
<evidence type="ECO:0000269" key="3">
    <source>
    </source>
</evidence>
<evidence type="ECO:0000269" key="4">
    <source ref="1"/>
</evidence>
<evidence type="ECO:0000303" key="5">
    <source>
    </source>
</evidence>
<evidence type="ECO:0000303" key="6">
    <source ref="1"/>
</evidence>
<evidence type="ECO:0000305" key="7"/>
<keyword id="KW-0106">Calcium</keyword>
<keyword id="KW-0903">Direct protein sequencing</keyword>
<keyword id="KW-0430">Lectin</keyword>
<keyword id="KW-0464">Manganese</keyword>
<keyword id="KW-0465">Mannose-binding</keyword>
<keyword id="KW-0479">Metal-binding</keyword>
<keyword id="KW-0926">Vacuole</keyword>
<feature type="chain" id="PRO_0000403321" description="Lactose-binding lectin-2">
    <location>
        <begin position="1"/>
        <end position="239"/>
    </location>
</feature>
<feature type="binding site" evidence="1">
    <location>
        <position position="122"/>
    </location>
    <ligand>
        <name>Mn(2+)</name>
        <dbReference type="ChEBI" id="CHEBI:29035"/>
    </ligand>
</feature>
<feature type="binding site" evidence="1">
    <location>
        <position position="124"/>
    </location>
    <ligand>
        <name>Ca(2+)</name>
        <dbReference type="ChEBI" id="CHEBI:29108"/>
    </ligand>
</feature>
<feature type="binding site" evidence="1">
    <location>
        <position position="124"/>
    </location>
    <ligand>
        <name>Mn(2+)</name>
        <dbReference type="ChEBI" id="CHEBI:29035"/>
    </ligand>
</feature>
<feature type="binding site" evidence="1">
    <location>
        <position position="126"/>
    </location>
    <ligand>
        <name>Ca(2+)</name>
        <dbReference type="ChEBI" id="CHEBI:29108"/>
    </ligand>
</feature>
<feature type="binding site" evidence="1">
    <location>
        <position position="128"/>
    </location>
    <ligand>
        <name>Ca(2+)</name>
        <dbReference type="ChEBI" id="CHEBI:29108"/>
    </ligand>
</feature>
<feature type="binding site" evidence="1">
    <location>
        <position position="131"/>
    </location>
    <ligand>
        <name>Ca(2+)</name>
        <dbReference type="ChEBI" id="CHEBI:29108"/>
    </ligand>
</feature>
<feature type="binding site" evidence="1">
    <location>
        <position position="131"/>
    </location>
    <ligand>
        <name>Mn(2+)</name>
        <dbReference type="ChEBI" id="CHEBI:29035"/>
    </ligand>
</feature>
<feature type="binding site" evidence="1">
    <location>
        <position position="137"/>
    </location>
    <ligand>
        <name>Mn(2+)</name>
        <dbReference type="ChEBI" id="CHEBI:29035"/>
    </ligand>
</feature>